<accession>Q81NV9</accession>
<accession>Q6HX31</accession>
<accession>Q6KR59</accession>
<protein>
    <recommendedName>
        <fullName evidence="1">UPF0178 protein BA_3063/GBAA_3063/BAS2849</fullName>
    </recommendedName>
</protein>
<keyword id="KW-1185">Reference proteome</keyword>
<comment type="similarity">
    <text evidence="1">Belongs to the UPF0178 family.</text>
</comment>
<evidence type="ECO:0000255" key="1">
    <source>
        <dbReference type="HAMAP-Rule" id="MF_00489"/>
    </source>
</evidence>
<gene>
    <name type="ordered locus">BA_3063</name>
    <name type="ordered locus">GBAA_3063</name>
    <name type="ordered locus">BAS2849</name>
</gene>
<organism>
    <name type="scientific">Bacillus anthracis</name>
    <dbReference type="NCBI Taxonomy" id="1392"/>
    <lineage>
        <taxon>Bacteria</taxon>
        <taxon>Bacillati</taxon>
        <taxon>Bacillota</taxon>
        <taxon>Bacilli</taxon>
        <taxon>Bacillales</taxon>
        <taxon>Bacillaceae</taxon>
        <taxon>Bacillus</taxon>
        <taxon>Bacillus cereus group</taxon>
    </lineage>
</organism>
<name>Y3063_BACAN</name>
<sequence>MKIYVDADACPVKDVIIFEATKAEIPVILVTSFSHYSNAEQPKGVETIYVDSGADAADYRIMQLAQKEDLIVTQDYGLASLALAKGCIVLHHKGYKYTNENIEQLLQTRYLSAMVRKSGKRTKGPKPFTAEDKEKFRALFKSMIAL</sequence>
<proteinExistence type="inferred from homology"/>
<feature type="chain" id="PRO_0000175955" description="UPF0178 protein BA_3063/GBAA_3063/BAS2849">
    <location>
        <begin position="1"/>
        <end position="146"/>
    </location>
</feature>
<dbReference type="EMBL" id="AE016879">
    <property type="protein sequence ID" value="AAP26879.1"/>
    <property type="molecule type" value="Genomic_DNA"/>
</dbReference>
<dbReference type="EMBL" id="AE017334">
    <property type="protein sequence ID" value="AAT32179.1"/>
    <property type="molecule type" value="Genomic_DNA"/>
</dbReference>
<dbReference type="EMBL" id="AE017225">
    <property type="protein sequence ID" value="AAT55158.1"/>
    <property type="molecule type" value="Genomic_DNA"/>
</dbReference>
<dbReference type="RefSeq" id="NP_845393.1">
    <property type="nucleotide sequence ID" value="NC_003997.3"/>
</dbReference>
<dbReference type="RefSeq" id="WP_000708743.1">
    <property type="nucleotide sequence ID" value="NZ_WXXJ01000029.1"/>
</dbReference>
<dbReference type="RefSeq" id="YP_029107.1">
    <property type="nucleotide sequence ID" value="NC_005945.1"/>
</dbReference>
<dbReference type="STRING" id="261594.GBAA_3063"/>
<dbReference type="DNASU" id="1087531"/>
<dbReference type="GeneID" id="45022869"/>
<dbReference type="KEGG" id="ban:BA_3063"/>
<dbReference type="KEGG" id="bar:GBAA_3063"/>
<dbReference type="KEGG" id="bat:BAS2849"/>
<dbReference type="PATRIC" id="fig|198094.11.peg.3044"/>
<dbReference type="eggNOG" id="COG1671">
    <property type="taxonomic scope" value="Bacteria"/>
</dbReference>
<dbReference type="HOGENOM" id="CLU_106619_0_0_9"/>
<dbReference type="OMA" id="CPVKDEI"/>
<dbReference type="OrthoDB" id="9798918at2"/>
<dbReference type="Proteomes" id="UP000000427">
    <property type="component" value="Chromosome"/>
</dbReference>
<dbReference type="Proteomes" id="UP000000594">
    <property type="component" value="Chromosome"/>
</dbReference>
<dbReference type="HAMAP" id="MF_00489">
    <property type="entry name" value="UPF0178"/>
    <property type="match status" value="1"/>
</dbReference>
<dbReference type="InterPro" id="IPR003791">
    <property type="entry name" value="UPF0178"/>
</dbReference>
<dbReference type="NCBIfam" id="NF001095">
    <property type="entry name" value="PRK00124.1"/>
    <property type="match status" value="1"/>
</dbReference>
<dbReference type="PANTHER" id="PTHR35146">
    <property type="entry name" value="UPF0178 PROTEIN YAII"/>
    <property type="match status" value="1"/>
</dbReference>
<dbReference type="PANTHER" id="PTHR35146:SF1">
    <property type="entry name" value="UPF0178 PROTEIN YAII"/>
    <property type="match status" value="1"/>
</dbReference>
<dbReference type="Pfam" id="PF02639">
    <property type="entry name" value="DUF188"/>
    <property type="match status" value="1"/>
</dbReference>
<reference key="1">
    <citation type="journal article" date="2003" name="Nature">
        <title>The genome sequence of Bacillus anthracis Ames and comparison to closely related bacteria.</title>
        <authorList>
            <person name="Read T.D."/>
            <person name="Peterson S.N."/>
            <person name="Tourasse N.J."/>
            <person name="Baillie L.W."/>
            <person name="Paulsen I.T."/>
            <person name="Nelson K.E."/>
            <person name="Tettelin H."/>
            <person name="Fouts D.E."/>
            <person name="Eisen J.A."/>
            <person name="Gill S.R."/>
            <person name="Holtzapple E.K."/>
            <person name="Okstad O.A."/>
            <person name="Helgason E."/>
            <person name="Rilstone J."/>
            <person name="Wu M."/>
            <person name="Kolonay J.F."/>
            <person name="Beanan M.J."/>
            <person name="Dodson R.J."/>
            <person name="Brinkac L.M."/>
            <person name="Gwinn M.L."/>
            <person name="DeBoy R.T."/>
            <person name="Madpu R."/>
            <person name="Daugherty S.C."/>
            <person name="Durkin A.S."/>
            <person name="Haft D.H."/>
            <person name="Nelson W.C."/>
            <person name="Peterson J.D."/>
            <person name="Pop M."/>
            <person name="Khouri H.M."/>
            <person name="Radune D."/>
            <person name="Benton J.L."/>
            <person name="Mahamoud Y."/>
            <person name="Jiang L."/>
            <person name="Hance I.R."/>
            <person name="Weidman J.F."/>
            <person name="Berry K.J."/>
            <person name="Plaut R.D."/>
            <person name="Wolf A.M."/>
            <person name="Watkins K.L."/>
            <person name="Nierman W.C."/>
            <person name="Hazen A."/>
            <person name="Cline R.T."/>
            <person name="Redmond C."/>
            <person name="Thwaite J.E."/>
            <person name="White O."/>
            <person name="Salzberg S.L."/>
            <person name="Thomason B."/>
            <person name="Friedlander A.M."/>
            <person name="Koehler T.M."/>
            <person name="Hanna P.C."/>
            <person name="Kolstoe A.-B."/>
            <person name="Fraser C.M."/>
        </authorList>
    </citation>
    <scope>NUCLEOTIDE SEQUENCE [LARGE SCALE GENOMIC DNA]</scope>
    <source>
        <strain>Ames / isolate Porton</strain>
    </source>
</reference>
<reference key="2">
    <citation type="journal article" date="2009" name="J. Bacteriol.">
        <title>The complete genome sequence of Bacillus anthracis Ames 'Ancestor'.</title>
        <authorList>
            <person name="Ravel J."/>
            <person name="Jiang L."/>
            <person name="Stanley S.T."/>
            <person name="Wilson M.R."/>
            <person name="Decker R.S."/>
            <person name="Read T.D."/>
            <person name="Worsham P."/>
            <person name="Keim P.S."/>
            <person name="Salzberg S.L."/>
            <person name="Fraser-Liggett C.M."/>
            <person name="Rasko D.A."/>
        </authorList>
    </citation>
    <scope>NUCLEOTIDE SEQUENCE [LARGE SCALE GENOMIC DNA]</scope>
    <source>
        <strain>Ames ancestor</strain>
    </source>
</reference>
<reference key="3">
    <citation type="submission" date="2004-01" db="EMBL/GenBank/DDBJ databases">
        <title>Complete genome sequence of Bacillus anthracis Sterne.</title>
        <authorList>
            <person name="Brettin T.S."/>
            <person name="Bruce D."/>
            <person name="Challacombe J.F."/>
            <person name="Gilna P."/>
            <person name="Han C."/>
            <person name="Hill K."/>
            <person name="Hitchcock P."/>
            <person name="Jackson P."/>
            <person name="Keim P."/>
            <person name="Longmire J."/>
            <person name="Lucas S."/>
            <person name="Okinaka R."/>
            <person name="Richardson P."/>
            <person name="Rubin E."/>
            <person name="Tice H."/>
        </authorList>
    </citation>
    <scope>NUCLEOTIDE SEQUENCE [LARGE SCALE GENOMIC DNA]</scope>
    <source>
        <strain>Sterne</strain>
    </source>
</reference>